<gene>
    <name evidence="1" type="primary">hslV</name>
    <name type="ordered locus">E2348C_4236</name>
</gene>
<feature type="chain" id="PRO_1000125406" description="ATP-dependent protease subunit HslV">
    <location>
        <begin position="1"/>
        <end position="176"/>
    </location>
</feature>
<feature type="active site" evidence="1">
    <location>
        <position position="2"/>
    </location>
</feature>
<feature type="binding site" evidence="1">
    <location>
        <position position="157"/>
    </location>
    <ligand>
        <name>Na(+)</name>
        <dbReference type="ChEBI" id="CHEBI:29101"/>
    </ligand>
</feature>
<feature type="binding site" evidence="1">
    <location>
        <position position="160"/>
    </location>
    <ligand>
        <name>Na(+)</name>
        <dbReference type="ChEBI" id="CHEBI:29101"/>
    </ligand>
</feature>
<feature type="binding site" evidence="1">
    <location>
        <position position="163"/>
    </location>
    <ligand>
        <name>Na(+)</name>
        <dbReference type="ChEBI" id="CHEBI:29101"/>
    </ligand>
</feature>
<keyword id="KW-0021">Allosteric enzyme</keyword>
<keyword id="KW-0963">Cytoplasm</keyword>
<keyword id="KW-0378">Hydrolase</keyword>
<keyword id="KW-0479">Metal-binding</keyword>
<keyword id="KW-0645">Protease</keyword>
<keyword id="KW-1185">Reference proteome</keyword>
<keyword id="KW-0915">Sodium</keyword>
<keyword id="KW-0346">Stress response</keyword>
<keyword id="KW-0888">Threonine protease</keyword>
<comment type="function">
    <text evidence="1">Protease subunit of a proteasome-like degradation complex believed to be a general protein degrading machinery.</text>
</comment>
<comment type="catalytic activity">
    <reaction evidence="1">
        <text>ATP-dependent cleavage of peptide bonds with broad specificity.</text>
        <dbReference type="EC" id="3.4.25.2"/>
    </reaction>
</comment>
<comment type="activity regulation">
    <text evidence="1">Allosterically activated by HslU binding.</text>
</comment>
<comment type="subunit">
    <text evidence="1">A double ring-shaped homohexamer of HslV is capped on each side by a ring-shaped HslU homohexamer. The assembly of the HslU/HslV complex is dependent on binding of ATP.</text>
</comment>
<comment type="subcellular location">
    <subcellularLocation>
        <location evidence="1">Cytoplasm</location>
    </subcellularLocation>
</comment>
<comment type="induction">
    <text evidence="1">By heat shock.</text>
</comment>
<comment type="similarity">
    <text evidence="1">Belongs to the peptidase T1B family. HslV subfamily.</text>
</comment>
<evidence type="ECO:0000255" key="1">
    <source>
        <dbReference type="HAMAP-Rule" id="MF_00248"/>
    </source>
</evidence>
<reference key="1">
    <citation type="journal article" date="2009" name="J. Bacteriol.">
        <title>Complete genome sequence and comparative genome analysis of enteropathogenic Escherichia coli O127:H6 strain E2348/69.</title>
        <authorList>
            <person name="Iguchi A."/>
            <person name="Thomson N.R."/>
            <person name="Ogura Y."/>
            <person name="Saunders D."/>
            <person name="Ooka T."/>
            <person name="Henderson I.R."/>
            <person name="Harris D."/>
            <person name="Asadulghani M."/>
            <person name="Kurokawa K."/>
            <person name="Dean P."/>
            <person name="Kenny B."/>
            <person name="Quail M.A."/>
            <person name="Thurston S."/>
            <person name="Dougan G."/>
            <person name="Hayashi T."/>
            <person name="Parkhill J."/>
            <person name="Frankel G."/>
        </authorList>
    </citation>
    <scope>NUCLEOTIDE SEQUENCE [LARGE SCALE GENOMIC DNA]</scope>
    <source>
        <strain>E2348/69 / EPEC</strain>
    </source>
</reference>
<proteinExistence type="inferred from homology"/>
<accession>B7UNQ2</accession>
<dbReference type="EC" id="3.4.25.2" evidence="1"/>
<dbReference type="EMBL" id="FM180568">
    <property type="protein sequence ID" value="CAS11784.1"/>
    <property type="molecule type" value="Genomic_DNA"/>
</dbReference>
<dbReference type="RefSeq" id="WP_000208242.1">
    <property type="nucleotide sequence ID" value="NC_011601.1"/>
</dbReference>
<dbReference type="SMR" id="B7UNQ2"/>
<dbReference type="MEROPS" id="T01.006"/>
<dbReference type="GeneID" id="93777966"/>
<dbReference type="KEGG" id="ecg:E2348C_4236"/>
<dbReference type="HOGENOM" id="CLU_093872_1_0_6"/>
<dbReference type="Proteomes" id="UP000008205">
    <property type="component" value="Chromosome"/>
</dbReference>
<dbReference type="GO" id="GO:0009376">
    <property type="term" value="C:HslUV protease complex"/>
    <property type="evidence" value="ECO:0007669"/>
    <property type="project" value="UniProtKB-UniRule"/>
</dbReference>
<dbReference type="GO" id="GO:0005839">
    <property type="term" value="C:proteasome core complex"/>
    <property type="evidence" value="ECO:0007669"/>
    <property type="project" value="InterPro"/>
</dbReference>
<dbReference type="GO" id="GO:0046872">
    <property type="term" value="F:metal ion binding"/>
    <property type="evidence" value="ECO:0007669"/>
    <property type="project" value="UniProtKB-KW"/>
</dbReference>
<dbReference type="GO" id="GO:0004298">
    <property type="term" value="F:threonine-type endopeptidase activity"/>
    <property type="evidence" value="ECO:0007669"/>
    <property type="project" value="UniProtKB-KW"/>
</dbReference>
<dbReference type="GO" id="GO:0051603">
    <property type="term" value="P:proteolysis involved in protein catabolic process"/>
    <property type="evidence" value="ECO:0007669"/>
    <property type="project" value="InterPro"/>
</dbReference>
<dbReference type="CDD" id="cd01913">
    <property type="entry name" value="protease_HslV"/>
    <property type="match status" value="1"/>
</dbReference>
<dbReference type="FunFam" id="3.60.20.10:FF:000002">
    <property type="entry name" value="ATP-dependent protease subunit HslV"/>
    <property type="match status" value="1"/>
</dbReference>
<dbReference type="Gene3D" id="3.60.20.10">
    <property type="entry name" value="Glutamine Phosphoribosylpyrophosphate, subunit 1, domain 1"/>
    <property type="match status" value="1"/>
</dbReference>
<dbReference type="HAMAP" id="MF_00248">
    <property type="entry name" value="HslV"/>
    <property type="match status" value="1"/>
</dbReference>
<dbReference type="InterPro" id="IPR022281">
    <property type="entry name" value="ATP-dep_Prtase_HsIV_su"/>
</dbReference>
<dbReference type="InterPro" id="IPR029055">
    <property type="entry name" value="Ntn_hydrolases_N"/>
</dbReference>
<dbReference type="InterPro" id="IPR001353">
    <property type="entry name" value="Proteasome_sua/b"/>
</dbReference>
<dbReference type="InterPro" id="IPR023333">
    <property type="entry name" value="Proteasome_suB-type"/>
</dbReference>
<dbReference type="NCBIfam" id="TIGR03692">
    <property type="entry name" value="ATP_dep_HslV"/>
    <property type="match status" value="1"/>
</dbReference>
<dbReference type="NCBIfam" id="NF003964">
    <property type="entry name" value="PRK05456.1"/>
    <property type="match status" value="1"/>
</dbReference>
<dbReference type="PANTHER" id="PTHR32194:SF0">
    <property type="entry name" value="ATP-DEPENDENT PROTEASE SUBUNIT HSLV"/>
    <property type="match status" value="1"/>
</dbReference>
<dbReference type="PANTHER" id="PTHR32194">
    <property type="entry name" value="METALLOPROTEASE TLDD"/>
    <property type="match status" value="1"/>
</dbReference>
<dbReference type="Pfam" id="PF00227">
    <property type="entry name" value="Proteasome"/>
    <property type="match status" value="1"/>
</dbReference>
<dbReference type="PIRSF" id="PIRSF039093">
    <property type="entry name" value="HslV"/>
    <property type="match status" value="1"/>
</dbReference>
<dbReference type="SUPFAM" id="SSF56235">
    <property type="entry name" value="N-terminal nucleophile aminohydrolases (Ntn hydrolases)"/>
    <property type="match status" value="1"/>
</dbReference>
<dbReference type="PROSITE" id="PS51476">
    <property type="entry name" value="PROTEASOME_BETA_2"/>
    <property type="match status" value="1"/>
</dbReference>
<organism>
    <name type="scientific">Escherichia coli O127:H6 (strain E2348/69 / EPEC)</name>
    <dbReference type="NCBI Taxonomy" id="574521"/>
    <lineage>
        <taxon>Bacteria</taxon>
        <taxon>Pseudomonadati</taxon>
        <taxon>Pseudomonadota</taxon>
        <taxon>Gammaproteobacteria</taxon>
        <taxon>Enterobacterales</taxon>
        <taxon>Enterobacteriaceae</taxon>
        <taxon>Escherichia</taxon>
    </lineage>
</organism>
<name>HSLV_ECO27</name>
<protein>
    <recommendedName>
        <fullName evidence="1">ATP-dependent protease subunit HslV</fullName>
        <ecNumber evidence="1">3.4.25.2</ecNumber>
    </recommendedName>
    <alternativeName>
        <fullName evidence="1">Heat shock protein HslV</fullName>
    </alternativeName>
</protein>
<sequence>MTTIVSVRRNGHVVIAGDGQATLGNTVMKGNVKKVRRLYNDKVIAGFAGGTADAFTLFELFERKLEMHQGHLVKAAVELAKDWRTDRMLRKLEALLAVADETASLIITGNGDVVQPENDLIAIGSGGPYAQAAARALLENTELSAREIAEKALDIAGDICIYTNHFHTIEELSYKA</sequence>